<organism>
    <name type="scientific">Erythrobacter litoralis (strain HTCC2594)</name>
    <dbReference type="NCBI Taxonomy" id="314225"/>
    <lineage>
        <taxon>Bacteria</taxon>
        <taxon>Pseudomonadati</taxon>
        <taxon>Pseudomonadota</taxon>
        <taxon>Alphaproteobacteria</taxon>
        <taxon>Sphingomonadales</taxon>
        <taxon>Erythrobacteraceae</taxon>
        <taxon>Erythrobacter/Porphyrobacter group</taxon>
        <taxon>Erythrobacter</taxon>
    </lineage>
</organism>
<feature type="chain" id="PRO_0000313230" description="DNA ligase">
    <location>
        <begin position="1"/>
        <end position="736"/>
    </location>
</feature>
<feature type="domain" description="BRCT" evidence="1">
    <location>
        <begin position="656"/>
        <end position="736"/>
    </location>
</feature>
<feature type="region of interest" description="Disordered" evidence="2">
    <location>
        <begin position="170"/>
        <end position="205"/>
    </location>
</feature>
<feature type="active site" description="N6-AMP-lysine intermediate" evidence="1">
    <location>
        <position position="127"/>
    </location>
</feature>
<feature type="binding site" evidence="1">
    <location>
        <begin position="41"/>
        <end position="45"/>
    </location>
    <ligand>
        <name>NAD(+)</name>
        <dbReference type="ChEBI" id="CHEBI:57540"/>
    </ligand>
</feature>
<feature type="binding site" evidence="1">
    <location>
        <begin position="91"/>
        <end position="92"/>
    </location>
    <ligand>
        <name>NAD(+)</name>
        <dbReference type="ChEBI" id="CHEBI:57540"/>
    </ligand>
</feature>
<feature type="binding site" evidence="1">
    <location>
        <position position="125"/>
    </location>
    <ligand>
        <name>NAD(+)</name>
        <dbReference type="ChEBI" id="CHEBI:57540"/>
    </ligand>
</feature>
<feature type="binding site" evidence="1">
    <location>
        <position position="148"/>
    </location>
    <ligand>
        <name>NAD(+)</name>
        <dbReference type="ChEBI" id="CHEBI:57540"/>
    </ligand>
</feature>
<feature type="binding site" evidence="1">
    <location>
        <position position="215"/>
    </location>
    <ligand>
        <name>NAD(+)</name>
        <dbReference type="ChEBI" id="CHEBI:57540"/>
    </ligand>
</feature>
<feature type="binding site" evidence="1">
    <location>
        <position position="347"/>
    </location>
    <ligand>
        <name>NAD(+)</name>
        <dbReference type="ChEBI" id="CHEBI:57540"/>
    </ligand>
</feature>
<feature type="binding site" evidence="1">
    <location>
        <position position="371"/>
    </location>
    <ligand>
        <name>NAD(+)</name>
        <dbReference type="ChEBI" id="CHEBI:57540"/>
    </ligand>
</feature>
<feature type="binding site" evidence="1">
    <location>
        <position position="463"/>
    </location>
    <ligand>
        <name>Zn(2+)</name>
        <dbReference type="ChEBI" id="CHEBI:29105"/>
    </ligand>
</feature>
<feature type="binding site" evidence="1">
    <location>
        <position position="466"/>
    </location>
    <ligand>
        <name>Zn(2+)</name>
        <dbReference type="ChEBI" id="CHEBI:29105"/>
    </ligand>
</feature>
<feature type="binding site" evidence="1">
    <location>
        <position position="481"/>
    </location>
    <ligand>
        <name>Zn(2+)</name>
        <dbReference type="ChEBI" id="CHEBI:29105"/>
    </ligand>
</feature>
<feature type="binding site" evidence="1">
    <location>
        <position position="487"/>
    </location>
    <ligand>
        <name>Zn(2+)</name>
        <dbReference type="ChEBI" id="CHEBI:29105"/>
    </ligand>
</feature>
<name>DNLJ_ERYLH</name>
<gene>
    <name evidence="1" type="primary">ligA</name>
    <name type="ordered locus">ELI_07215</name>
</gene>
<keyword id="KW-0227">DNA damage</keyword>
<keyword id="KW-0234">DNA repair</keyword>
<keyword id="KW-0235">DNA replication</keyword>
<keyword id="KW-0436">Ligase</keyword>
<keyword id="KW-0460">Magnesium</keyword>
<keyword id="KW-0464">Manganese</keyword>
<keyword id="KW-0479">Metal-binding</keyword>
<keyword id="KW-0520">NAD</keyword>
<keyword id="KW-1185">Reference proteome</keyword>
<keyword id="KW-0862">Zinc</keyword>
<dbReference type="EC" id="6.5.1.2" evidence="1"/>
<dbReference type="EMBL" id="CP000157">
    <property type="protein sequence ID" value="ABC63535.1"/>
    <property type="molecule type" value="Genomic_DNA"/>
</dbReference>
<dbReference type="RefSeq" id="WP_011414371.1">
    <property type="nucleotide sequence ID" value="NC_007722.1"/>
</dbReference>
<dbReference type="SMR" id="Q2N9V6"/>
<dbReference type="STRING" id="314225.ELI_07215"/>
<dbReference type="KEGG" id="eli:ELI_07215"/>
<dbReference type="eggNOG" id="COG0272">
    <property type="taxonomic scope" value="Bacteria"/>
</dbReference>
<dbReference type="HOGENOM" id="CLU_007764_2_1_5"/>
<dbReference type="OrthoDB" id="9759736at2"/>
<dbReference type="Proteomes" id="UP000008808">
    <property type="component" value="Chromosome"/>
</dbReference>
<dbReference type="GO" id="GO:0005829">
    <property type="term" value="C:cytosol"/>
    <property type="evidence" value="ECO:0007669"/>
    <property type="project" value="TreeGrafter"/>
</dbReference>
<dbReference type="GO" id="GO:0003911">
    <property type="term" value="F:DNA ligase (NAD+) activity"/>
    <property type="evidence" value="ECO:0007669"/>
    <property type="project" value="UniProtKB-UniRule"/>
</dbReference>
<dbReference type="GO" id="GO:0046872">
    <property type="term" value="F:metal ion binding"/>
    <property type="evidence" value="ECO:0007669"/>
    <property type="project" value="UniProtKB-KW"/>
</dbReference>
<dbReference type="GO" id="GO:0006281">
    <property type="term" value="P:DNA repair"/>
    <property type="evidence" value="ECO:0007669"/>
    <property type="project" value="UniProtKB-KW"/>
</dbReference>
<dbReference type="GO" id="GO:0006260">
    <property type="term" value="P:DNA replication"/>
    <property type="evidence" value="ECO:0007669"/>
    <property type="project" value="UniProtKB-KW"/>
</dbReference>
<dbReference type="CDD" id="cd17748">
    <property type="entry name" value="BRCT_DNA_ligase_like"/>
    <property type="match status" value="1"/>
</dbReference>
<dbReference type="CDD" id="cd00114">
    <property type="entry name" value="LIGANc"/>
    <property type="match status" value="1"/>
</dbReference>
<dbReference type="FunFam" id="1.10.150.20:FF:000007">
    <property type="entry name" value="DNA ligase"/>
    <property type="match status" value="1"/>
</dbReference>
<dbReference type="FunFam" id="2.40.50.140:FF:000012">
    <property type="entry name" value="DNA ligase"/>
    <property type="match status" value="1"/>
</dbReference>
<dbReference type="Gene3D" id="6.20.10.30">
    <property type="match status" value="1"/>
</dbReference>
<dbReference type="Gene3D" id="1.10.150.20">
    <property type="entry name" value="5' to 3' exonuclease, C-terminal subdomain"/>
    <property type="match status" value="2"/>
</dbReference>
<dbReference type="Gene3D" id="3.40.50.10190">
    <property type="entry name" value="BRCT domain"/>
    <property type="match status" value="1"/>
</dbReference>
<dbReference type="Gene3D" id="3.30.470.30">
    <property type="entry name" value="DNA ligase/mRNA capping enzyme"/>
    <property type="match status" value="1"/>
</dbReference>
<dbReference type="Gene3D" id="1.10.287.610">
    <property type="entry name" value="Helix hairpin bin"/>
    <property type="match status" value="1"/>
</dbReference>
<dbReference type="Gene3D" id="2.40.50.140">
    <property type="entry name" value="Nucleic acid-binding proteins"/>
    <property type="match status" value="1"/>
</dbReference>
<dbReference type="HAMAP" id="MF_01588">
    <property type="entry name" value="DNA_ligase_A"/>
    <property type="match status" value="1"/>
</dbReference>
<dbReference type="InterPro" id="IPR001357">
    <property type="entry name" value="BRCT_dom"/>
</dbReference>
<dbReference type="InterPro" id="IPR036420">
    <property type="entry name" value="BRCT_dom_sf"/>
</dbReference>
<dbReference type="InterPro" id="IPR041663">
    <property type="entry name" value="DisA/LigA_HHH"/>
</dbReference>
<dbReference type="InterPro" id="IPR001679">
    <property type="entry name" value="DNA_ligase"/>
</dbReference>
<dbReference type="InterPro" id="IPR018239">
    <property type="entry name" value="DNA_ligase_AS"/>
</dbReference>
<dbReference type="InterPro" id="IPR033136">
    <property type="entry name" value="DNA_ligase_CS"/>
</dbReference>
<dbReference type="InterPro" id="IPR013839">
    <property type="entry name" value="DNAligase_adenylation"/>
</dbReference>
<dbReference type="InterPro" id="IPR013840">
    <property type="entry name" value="DNAligase_N"/>
</dbReference>
<dbReference type="InterPro" id="IPR012340">
    <property type="entry name" value="NA-bd_OB-fold"/>
</dbReference>
<dbReference type="InterPro" id="IPR004150">
    <property type="entry name" value="NAD_DNA_ligase_OB"/>
</dbReference>
<dbReference type="InterPro" id="IPR010994">
    <property type="entry name" value="RuvA_2-like"/>
</dbReference>
<dbReference type="InterPro" id="IPR004149">
    <property type="entry name" value="Znf_DNAligase_C4"/>
</dbReference>
<dbReference type="NCBIfam" id="TIGR00575">
    <property type="entry name" value="dnlj"/>
    <property type="match status" value="1"/>
</dbReference>
<dbReference type="NCBIfam" id="NF005932">
    <property type="entry name" value="PRK07956.1"/>
    <property type="match status" value="1"/>
</dbReference>
<dbReference type="PANTHER" id="PTHR23389">
    <property type="entry name" value="CHROMOSOME TRANSMISSION FIDELITY FACTOR 18"/>
    <property type="match status" value="1"/>
</dbReference>
<dbReference type="PANTHER" id="PTHR23389:SF9">
    <property type="entry name" value="DNA LIGASE"/>
    <property type="match status" value="1"/>
</dbReference>
<dbReference type="Pfam" id="PF00533">
    <property type="entry name" value="BRCT"/>
    <property type="match status" value="1"/>
</dbReference>
<dbReference type="Pfam" id="PF01653">
    <property type="entry name" value="DNA_ligase_aden"/>
    <property type="match status" value="2"/>
</dbReference>
<dbReference type="Pfam" id="PF03120">
    <property type="entry name" value="DNA_ligase_OB"/>
    <property type="match status" value="1"/>
</dbReference>
<dbReference type="Pfam" id="PF03119">
    <property type="entry name" value="DNA_ligase_ZBD"/>
    <property type="match status" value="1"/>
</dbReference>
<dbReference type="Pfam" id="PF12826">
    <property type="entry name" value="HHH_2"/>
    <property type="match status" value="1"/>
</dbReference>
<dbReference type="PIRSF" id="PIRSF001604">
    <property type="entry name" value="LigA"/>
    <property type="match status" value="1"/>
</dbReference>
<dbReference type="SMART" id="SM00292">
    <property type="entry name" value="BRCT"/>
    <property type="match status" value="1"/>
</dbReference>
<dbReference type="SMART" id="SM00532">
    <property type="entry name" value="LIGANc"/>
    <property type="match status" value="1"/>
</dbReference>
<dbReference type="SUPFAM" id="SSF52113">
    <property type="entry name" value="BRCT domain"/>
    <property type="match status" value="1"/>
</dbReference>
<dbReference type="SUPFAM" id="SSF56091">
    <property type="entry name" value="DNA ligase/mRNA capping enzyme, catalytic domain"/>
    <property type="match status" value="1"/>
</dbReference>
<dbReference type="SUPFAM" id="SSF50249">
    <property type="entry name" value="Nucleic acid-binding proteins"/>
    <property type="match status" value="1"/>
</dbReference>
<dbReference type="SUPFAM" id="SSF47781">
    <property type="entry name" value="RuvA domain 2-like"/>
    <property type="match status" value="1"/>
</dbReference>
<dbReference type="PROSITE" id="PS50172">
    <property type="entry name" value="BRCT"/>
    <property type="match status" value="1"/>
</dbReference>
<dbReference type="PROSITE" id="PS01055">
    <property type="entry name" value="DNA_LIGASE_N1"/>
    <property type="match status" value="1"/>
</dbReference>
<dbReference type="PROSITE" id="PS01056">
    <property type="entry name" value="DNA_LIGASE_N2"/>
    <property type="match status" value="1"/>
</dbReference>
<comment type="function">
    <text evidence="1">DNA ligase that catalyzes the formation of phosphodiester linkages between 5'-phosphoryl and 3'-hydroxyl groups in double-stranded DNA using NAD as a coenzyme and as the energy source for the reaction. It is essential for DNA replication and repair of damaged DNA.</text>
</comment>
<comment type="catalytic activity">
    <reaction evidence="1">
        <text>NAD(+) + (deoxyribonucleotide)n-3'-hydroxyl + 5'-phospho-(deoxyribonucleotide)m = (deoxyribonucleotide)n+m + AMP + beta-nicotinamide D-nucleotide.</text>
        <dbReference type="EC" id="6.5.1.2"/>
    </reaction>
</comment>
<comment type="cofactor">
    <cofactor evidence="1">
        <name>Mg(2+)</name>
        <dbReference type="ChEBI" id="CHEBI:18420"/>
    </cofactor>
    <cofactor evidence="1">
        <name>Mn(2+)</name>
        <dbReference type="ChEBI" id="CHEBI:29035"/>
    </cofactor>
</comment>
<comment type="similarity">
    <text evidence="1">Belongs to the NAD-dependent DNA ligase family. LigA subfamily.</text>
</comment>
<proteinExistence type="inferred from homology"/>
<reference key="1">
    <citation type="journal article" date="2009" name="J. Bacteriol.">
        <title>Complete genome sequence of Erythrobacter litoralis HTCC2594.</title>
        <authorList>
            <person name="Oh H.M."/>
            <person name="Giovannoni S.J."/>
            <person name="Ferriera S."/>
            <person name="Johnson J."/>
            <person name="Cho J.C."/>
        </authorList>
    </citation>
    <scope>NUCLEOTIDE SEQUENCE [LARGE SCALE GENOMIC DNA]</scope>
    <source>
        <strain>HTCC2594</strain>
    </source>
</reference>
<evidence type="ECO:0000255" key="1">
    <source>
        <dbReference type="HAMAP-Rule" id="MF_01588"/>
    </source>
</evidence>
<evidence type="ECO:0000256" key="2">
    <source>
        <dbReference type="SAM" id="MobiDB-lite"/>
    </source>
</evidence>
<accession>Q2N9V6</accession>
<protein>
    <recommendedName>
        <fullName evidence="1">DNA ligase</fullName>
        <ecNumber evidence="1">6.5.1.2</ecNumber>
    </recommendedName>
    <alternativeName>
        <fullName evidence="1">Polydeoxyribonucleotide synthase [NAD(+)]</fullName>
    </alternativeName>
</protein>
<sequence>MTTELENLSEAEAANELMRLARQIAKHDRLYHAEDAPEITDQEYDALVRRNAELEAAFPHLVREDSPSRKVGHAVAASPLSKVTHEVRMMSLDNAFADEEVAEFVARVRRYLNIGEDEAIAFTAEDKIDGLSCSLRYENGKLVRAATRGDGQVGEDVTPNVAHIGDIPQELTPLPLAGGAGGGPLDDSGSAPTPDPSRRREGKWNGPAVFEIRGEVYMATADFHALNARLMDEARAEADEKDNAFDTAKVRQFANPRNAAAGSLRQKDASVTATRPLRFWAHGWGAVEGDVPGETQVEVVEQIAAWGVPVSPLFRRCETLEEMLAHYEAIGAQRADLPYEIDGVVYKVDRLDYQQRLGFVAKAPRWAIARKFPAEQAETTLENIDIQVGRTGKLTPVGRLAPVLVGGVTVTNVTLHNRDEIERLGVRPGDRVVVQRAGDVIPQVVRNLTPDEKRDSFEFPDTCPECGSEAVSEEGGVDVRCTGGLICPAQRTERLKHFVSRAALDIDGLGEKTIDQFFALGWLESPADIFRLKDRRDEILALEGWMDKSVDNLLASVEARREPDTARLLLGLGIRHVGAVTARDLMKYFHELPALRETAEKARAGDEEAVVALTSIDGIGSAVVEALGDFFHEEHNRAVWDDLLSEVSPPRYEVETLDSPVAGKTVVFTGKLETMSRDEAKAQAERLGAKASGSVSAKTDLLVAGPGAGSKLKKAQDLGIEVIDEAGWAEIVAAAG</sequence>